<gene>
    <name evidence="1" type="primary">fhs</name>
    <name type="ordered locus">Rcas_0522</name>
</gene>
<feature type="chain" id="PRO_1000087654" description="Formate--tetrahydrofolate ligase">
    <location>
        <begin position="1"/>
        <end position="564"/>
    </location>
</feature>
<feature type="binding site" evidence="1">
    <location>
        <begin position="65"/>
        <end position="72"/>
    </location>
    <ligand>
        <name>ATP</name>
        <dbReference type="ChEBI" id="CHEBI:30616"/>
    </ligand>
</feature>
<reference key="1">
    <citation type="submission" date="2007-08" db="EMBL/GenBank/DDBJ databases">
        <title>Complete sequence of Roseiflexus castenholzii DSM 13941.</title>
        <authorList>
            <consortium name="US DOE Joint Genome Institute"/>
            <person name="Copeland A."/>
            <person name="Lucas S."/>
            <person name="Lapidus A."/>
            <person name="Barry K."/>
            <person name="Glavina del Rio T."/>
            <person name="Dalin E."/>
            <person name="Tice H."/>
            <person name="Pitluck S."/>
            <person name="Thompson L.S."/>
            <person name="Brettin T."/>
            <person name="Bruce D."/>
            <person name="Detter J.C."/>
            <person name="Han C."/>
            <person name="Tapia R."/>
            <person name="Schmutz J."/>
            <person name="Larimer F."/>
            <person name="Land M."/>
            <person name="Hauser L."/>
            <person name="Kyrpides N."/>
            <person name="Mikhailova N."/>
            <person name="Bryant D.A."/>
            <person name="Hanada S."/>
            <person name="Tsukatani Y."/>
            <person name="Richardson P."/>
        </authorList>
    </citation>
    <scope>NUCLEOTIDE SEQUENCE [LARGE SCALE GENOMIC DNA]</scope>
    <source>
        <strain>DSM 13941 / HLO8</strain>
    </source>
</reference>
<accession>A7NGQ9</accession>
<name>FTHS_ROSCS</name>
<sequence length="564" mass="60188">MRSDLDIAQAARLRPIRAVAADLGLTDDDIELYGRSIAKIDLGILQRLTDQPRGRYIVVTAITPTPLGEGKTTTTIGLGQALARLGKRSVVTIRQPSMGPTFGIKGGAAGGGYSQVLPMEQFNLHLTGDIHAIGAAHNLLAAMIDNHLHHGNQCGIDPYAIFWSRVVDISDRVLRNVVVGLGKKEDGPMRQTQFDITVASEVMAILALTTNLHDLRQRLGRIVAAYTRDGAPVTAEDLHAAGAMTVLLKEAIKPNLLQTLEGSPALVHCGPFANIAHGASSVLADMIGLHCADYVVTESGFGADIGFEKFCDIKCRASGLAPDAVVLVATVRALKAHSGRYTITAGRPLDPRLAEENPEDVADGAANLAAQVRIARLFGRPVVVAINRFPDDFPSEVEVIRQVARESGAFDVVESFVFAEGGAGGCDLARAAIQACEAPGTFTPLYPLDMSLREKIETLATKVYGATRVEYTPEASRRLAQFEHQGYGNLPICMAKTHLSISHDPKLRGAPSGYVFPIRDVRLAAGAGFIYPLAGDIRTMPGLPAHPAAERIDIDAEGRTRGLS</sequence>
<comment type="catalytic activity">
    <reaction evidence="1">
        <text>(6S)-5,6,7,8-tetrahydrofolate + formate + ATP = (6R)-10-formyltetrahydrofolate + ADP + phosphate</text>
        <dbReference type="Rhea" id="RHEA:20221"/>
        <dbReference type="ChEBI" id="CHEBI:15740"/>
        <dbReference type="ChEBI" id="CHEBI:30616"/>
        <dbReference type="ChEBI" id="CHEBI:43474"/>
        <dbReference type="ChEBI" id="CHEBI:57453"/>
        <dbReference type="ChEBI" id="CHEBI:195366"/>
        <dbReference type="ChEBI" id="CHEBI:456216"/>
        <dbReference type="EC" id="6.3.4.3"/>
    </reaction>
</comment>
<comment type="pathway">
    <text evidence="1">One-carbon metabolism; tetrahydrofolate interconversion.</text>
</comment>
<comment type="similarity">
    <text evidence="1">Belongs to the formate--tetrahydrofolate ligase family.</text>
</comment>
<dbReference type="EC" id="6.3.4.3" evidence="1"/>
<dbReference type="EMBL" id="CP000804">
    <property type="protein sequence ID" value="ABU56652.1"/>
    <property type="molecule type" value="Genomic_DNA"/>
</dbReference>
<dbReference type="RefSeq" id="WP_012119083.1">
    <property type="nucleotide sequence ID" value="NC_009767.1"/>
</dbReference>
<dbReference type="SMR" id="A7NGQ9"/>
<dbReference type="STRING" id="383372.Rcas_0522"/>
<dbReference type="KEGG" id="rca:Rcas_0522"/>
<dbReference type="eggNOG" id="COG2759">
    <property type="taxonomic scope" value="Bacteria"/>
</dbReference>
<dbReference type="HOGENOM" id="CLU_003601_3_3_0"/>
<dbReference type="OrthoDB" id="9761733at2"/>
<dbReference type="UniPathway" id="UPA00193"/>
<dbReference type="Proteomes" id="UP000000263">
    <property type="component" value="Chromosome"/>
</dbReference>
<dbReference type="GO" id="GO:0005524">
    <property type="term" value="F:ATP binding"/>
    <property type="evidence" value="ECO:0007669"/>
    <property type="project" value="UniProtKB-UniRule"/>
</dbReference>
<dbReference type="GO" id="GO:0004329">
    <property type="term" value="F:formate-tetrahydrofolate ligase activity"/>
    <property type="evidence" value="ECO:0007669"/>
    <property type="project" value="UniProtKB-UniRule"/>
</dbReference>
<dbReference type="GO" id="GO:0035999">
    <property type="term" value="P:tetrahydrofolate interconversion"/>
    <property type="evidence" value="ECO:0007669"/>
    <property type="project" value="UniProtKB-UniRule"/>
</dbReference>
<dbReference type="CDD" id="cd00477">
    <property type="entry name" value="FTHFS"/>
    <property type="match status" value="1"/>
</dbReference>
<dbReference type="FunFam" id="3.30.1510.10:FF:000001">
    <property type="entry name" value="Formate--tetrahydrofolate ligase"/>
    <property type="match status" value="1"/>
</dbReference>
<dbReference type="FunFam" id="3.10.410.10:FF:000001">
    <property type="entry name" value="Putative formate--tetrahydrofolate ligase"/>
    <property type="match status" value="1"/>
</dbReference>
<dbReference type="Gene3D" id="3.30.1510.10">
    <property type="entry name" value="Domain 2, N(10)-formyltetrahydrofolate synthetase"/>
    <property type="match status" value="1"/>
</dbReference>
<dbReference type="Gene3D" id="3.10.410.10">
    <property type="entry name" value="Formyltetrahydrofolate synthetase, domain 3"/>
    <property type="match status" value="1"/>
</dbReference>
<dbReference type="Gene3D" id="3.40.50.300">
    <property type="entry name" value="P-loop containing nucleotide triphosphate hydrolases"/>
    <property type="match status" value="1"/>
</dbReference>
<dbReference type="HAMAP" id="MF_01543">
    <property type="entry name" value="FTHFS"/>
    <property type="match status" value="1"/>
</dbReference>
<dbReference type="InterPro" id="IPR000559">
    <property type="entry name" value="Formate_THF_ligase"/>
</dbReference>
<dbReference type="InterPro" id="IPR020628">
    <property type="entry name" value="Formate_THF_ligase_CS"/>
</dbReference>
<dbReference type="InterPro" id="IPR027417">
    <property type="entry name" value="P-loop_NTPase"/>
</dbReference>
<dbReference type="NCBIfam" id="NF010030">
    <property type="entry name" value="PRK13505.1"/>
    <property type="match status" value="1"/>
</dbReference>
<dbReference type="Pfam" id="PF01268">
    <property type="entry name" value="FTHFS"/>
    <property type="match status" value="1"/>
</dbReference>
<dbReference type="SUPFAM" id="SSF52540">
    <property type="entry name" value="P-loop containing nucleoside triphosphate hydrolases"/>
    <property type="match status" value="1"/>
</dbReference>
<dbReference type="PROSITE" id="PS00721">
    <property type="entry name" value="FTHFS_1"/>
    <property type="match status" value="1"/>
</dbReference>
<dbReference type="PROSITE" id="PS00722">
    <property type="entry name" value="FTHFS_2"/>
    <property type="match status" value="1"/>
</dbReference>
<protein>
    <recommendedName>
        <fullName evidence="1">Formate--tetrahydrofolate ligase</fullName>
        <ecNumber evidence="1">6.3.4.3</ecNumber>
    </recommendedName>
    <alternativeName>
        <fullName evidence="1">Formyltetrahydrofolate synthetase</fullName>
        <shortName evidence="1">FHS</shortName>
        <shortName evidence="1">FTHFS</shortName>
    </alternativeName>
</protein>
<organism>
    <name type="scientific">Roseiflexus castenholzii (strain DSM 13941 / HLO8)</name>
    <dbReference type="NCBI Taxonomy" id="383372"/>
    <lineage>
        <taxon>Bacteria</taxon>
        <taxon>Bacillati</taxon>
        <taxon>Chloroflexota</taxon>
        <taxon>Chloroflexia</taxon>
        <taxon>Chloroflexales</taxon>
        <taxon>Roseiflexineae</taxon>
        <taxon>Roseiflexaceae</taxon>
        <taxon>Roseiflexus</taxon>
    </lineage>
</organism>
<evidence type="ECO:0000255" key="1">
    <source>
        <dbReference type="HAMAP-Rule" id="MF_01543"/>
    </source>
</evidence>
<keyword id="KW-0067">ATP-binding</keyword>
<keyword id="KW-0436">Ligase</keyword>
<keyword id="KW-0547">Nucleotide-binding</keyword>
<keyword id="KW-0554">One-carbon metabolism</keyword>
<keyword id="KW-1185">Reference proteome</keyword>
<proteinExistence type="inferred from homology"/>